<sequence>MALVLKISGRVFDNEELVLKYAEILNKLPGRIAVVAGGGEVARRYIAVARKGGASNTFQDLLGIYASRLNALLLISLLKDAYAKVPRNMEEFLEAWGRSRIVVTGGFQPGQSTATVAALVAEAVRAAALLNAANIDAVYSDDPRKNPNATRLSELKYDEFERILRSSNLPGGYELIDTWAVSILKRSCITTYIFDGRTPEAIEAVVRGENPGSKITC</sequence>
<accession>A4WLE9</accession>
<reference key="1">
    <citation type="submission" date="2007-04" db="EMBL/GenBank/DDBJ databases">
        <title>Complete sequence of Pyrobaculum arsenaticum DSM 13514.</title>
        <authorList>
            <consortium name="US DOE Joint Genome Institute"/>
            <person name="Copeland A."/>
            <person name="Lucas S."/>
            <person name="Lapidus A."/>
            <person name="Barry K."/>
            <person name="Glavina del Rio T."/>
            <person name="Dalin E."/>
            <person name="Tice H."/>
            <person name="Pitluck S."/>
            <person name="Chain P."/>
            <person name="Malfatti S."/>
            <person name="Shin M."/>
            <person name="Vergez L."/>
            <person name="Schmutz J."/>
            <person name="Larimer F."/>
            <person name="Land M."/>
            <person name="Hauser L."/>
            <person name="Kyrpides N."/>
            <person name="Mikhailova N."/>
            <person name="Cozen A.E."/>
            <person name="Fitz-Gibbon S.T."/>
            <person name="House C.H."/>
            <person name="Saltikov C."/>
            <person name="Lowe T.M."/>
            <person name="Richardson P."/>
        </authorList>
    </citation>
    <scope>NUCLEOTIDE SEQUENCE [LARGE SCALE GENOMIC DNA]</scope>
    <source>
        <strain>ATCC 700994 / DSM 13514 / JCM 11321 / PZ6</strain>
    </source>
</reference>
<dbReference type="EC" id="2.7.4.22" evidence="1"/>
<dbReference type="EMBL" id="CP000660">
    <property type="protein sequence ID" value="ABP51216.1"/>
    <property type="molecule type" value="Genomic_DNA"/>
</dbReference>
<dbReference type="RefSeq" id="WP_011901122.1">
    <property type="nucleotide sequence ID" value="NC_009376.1"/>
</dbReference>
<dbReference type="SMR" id="A4WLE9"/>
<dbReference type="STRING" id="340102.Pars_1665"/>
<dbReference type="GeneID" id="5054316"/>
<dbReference type="KEGG" id="pas:Pars_1665"/>
<dbReference type="HOGENOM" id="CLU_079546_0_0_2"/>
<dbReference type="OrthoDB" id="372251at2157"/>
<dbReference type="PhylomeDB" id="A4WLE9"/>
<dbReference type="UniPathway" id="UPA00159">
    <property type="reaction ID" value="UER00275"/>
</dbReference>
<dbReference type="Proteomes" id="UP000001567">
    <property type="component" value="Chromosome"/>
</dbReference>
<dbReference type="GO" id="GO:0005737">
    <property type="term" value="C:cytoplasm"/>
    <property type="evidence" value="ECO:0007669"/>
    <property type="project" value="UniProtKB-SubCell"/>
</dbReference>
<dbReference type="GO" id="GO:0005524">
    <property type="term" value="F:ATP binding"/>
    <property type="evidence" value="ECO:0007669"/>
    <property type="project" value="UniProtKB-KW"/>
</dbReference>
<dbReference type="GO" id="GO:0033862">
    <property type="term" value="F:UMP kinase activity"/>
    <property type="evidence" value="ECO:0007669"/>
    <property type="project" value="UniProtKB-EC"/>
</dbReference>
<dbReference type="GO" id="GO:0044210">
    <property type="term" value="P:'de novo' CTP biosynthetic process"/>
    <property type="evidence" value="ECO:0007669"/>
    <property type="project" value="UniProtKB-UniRule"/>
</dbReference>
<dbReference type="GO" id="GO:0006225">
    <property type="term" value="P:UDP biosynthetic process"/>
    <property type="evidence" value="ECO:0007669"/>
    <property type="project" value="TreeGrafter"/>
</dbReference>
<dbReference type="Gene3D" id="3.40.1160.10">
    <property type="entry name" value="Acetylglutamate kinase-like"/>
    <property type="match status" value="1"/>
</dbReference>
<dbReference type="HAMAP" id="MF_01220_A">
    <property type="entry name" value="PyrH_A"/>
    <property type="match status" value="1"/>
</dbReference>
<dbReference type="InterPro" id="IPR036393">
    <property type="entry name" value="AceGlu_kinase-like_sf"/>
</dbReference>
<dbReference type="InterPro" id="IPR001048">
    <property type="entry name" value="Asp/Glu/Uridylate_kinase"/>
</dbReference>
<dbReference type="InterPro" id="IPR011817">
    <property type="entry name" value="Uridylate_kinase"/>
</dbReference>
<dbReference type="InterPro" id="IPR011818">
    <property type="entry name" value="Uridylate_kinase_arch/spir"/>
</dbReference>
<dbReference type="NCBIfam" id="TIGR02076">
    <property type="entry name" value="pyrH_arch"/>
    <property type="match status" value="1"/>
</dbReference>
<dbReference type="PANTHER" id="PTHR42833">
    <property type="entry name" value="URIDYLATE KINASE"/>
    <property type="match status" value="1"/>
</dbReference>
<dbReference type="PANTHER" id="PTHR42833:SF4">
    <property type="entry name" value="URIDYLATE KINASE PUMPKIN, CHLOROPLASTIC"/>
    <property type="match status" value="1"/>
</dbReference>
<dbReference type="Pfam" id="PF00696">
    <property type="entry name" value="AA_kinase"/>
    <property type="match status" value="1"/>
</dbReference>
<dbReference type="PIRSF" id="PIRSF005650">
    <property type="entry name" value="Uridylate_kin"/>
    <property type="match status" value="1"/>
</dbReference>
<dbReference type="SUPFAM" id="SSF53633">
    <property type="entry name" value="Carbamate kinase-like"/>
    <property type="match status" value="1"/>
</dbReference>
<comment type="function">
    <text evidence="1">Catalyzes the reversible phosphorylation of UMP to UDP.</text>
</comment>
<comment type="catalytic activity">
    <reaction evidence="1">
        <text>UMP + ATP = UDP + ADP</text>
        <dbReference type="Rhea" id="RHEA:24400"/>
        <dbReference type="ChEBI" id="CHEBI:30616"/>
        <dbReference type="ChEBI" id="CHEBI:57865"/>
        <dbReference type="ChEBI" id="CHEBI:58223"/>
        <dbReference type="ChEBI" id="CHEBI:456216"/>
        <dbReference type="EC" id="2.7.4.22"/>
    </reaction>
</comment>
<comment type="activity regulation">
    <text evidence="1">Inhibited by UTP.</text>
</comment>
<comment type="pathway">
    <text evidence="1">Pyrimidine metabolism; CTP biosynthesis via de novo pathway; UDP from UMP (UMPK route): step 1/1.</text>
</comment>
<comment type="subunit">
    <text evidence="1">Homohexamer.</text>
</comment>
<comment type="subcellular location">
    <subcellularLocation>
        <location evidence="1">Cytoplasm</location>
    </subcellularLocation>
</comment>
<comment type="similarity">
    <text evidence="1">Belongs to the UMP kinase family.</text>
</comment>
<organism>
    <name type="scientific">Pyrobaculum arsenaticum (strain DSM 13514 / JCM 11321 / PZ6)</name>
    <dbReference type="NCBI Taxonomy" id="340102"/>
    <lineage>
        <taxon>Archaea</taxon>
        <taxon>Thermoproteota</taxon>
        <taxon>Thermoprotei</taxon>
        <taxon>Thermoproteales</taxon>
        <taxon>Thermoproteaceae</taxon>
        <taxon>Pyrobaculum</taxon>
    </lineage>
</organism>
<evidence type="ECO:0000255" key="1">
    <source>
        <dbReference type="HAMAP-Rule" id="MF_01220"/>
    </source>
</evidence>
<keyword id="KW-0067">ATP-binding</keyword>
<keyword id="KW-0963">Cytoplasm</keyword>
<keyword id="KW-0418">Kinase</keyword>
<keyword id="KW-0547">Nucleotide-binding</keyword>
<keyword id="KW-0665">Pyrimidine biosynthesis</keyword>
<keyword id="KW-0808">Transferase</keyword>
<proteinExistence type="inferred from homology"/>
<gene>
    <name evidence="1" type="primary">pyrH</name>
    <name type="ordered locus">Pars_1665</name>
</gene>
<protein>
    <recommendedName>
        <fullName evidence="1">Uridylate kinase</fullName>
        <shortName evidence="1">UK</shortName>
        <ecNumber evidence="1">2.7.4.22</ecNumber>
    </recommendedName>
    <alternativeName>
        <fullName evidence="1">Uridine monophosphate kinase</fullName>
        <shortName evidence="1">UMP kinase</shortName>
        <shortName evidence="1">UMPK</shortName>
    </alternativeName>
</protein>
<feature type="chain" id="PRO_1000053991" description="Uridylate kinase">
    <location>
        <begin position="1"/>
        <end position="217"/>
    </location>
</feature>
<feature type="binding site" evidence="1">
    <location>
        <begin position="6"/>
        <end position="10"/>
    </location>
    <ligand>
        <name>ATP</name>
        <dbReference type="ChEBI" id="CHEBI:30616"/>
    </ligand>
</feature>
<feature type="binding site" evidence="1">
    <location>
        <position position="38"/>
    </location>
    <ligand>
        <name>UMP</name>
        <dbReference type="ChEBI" id="CHEBI:57865"/>
    </ligand>
</feature>
<feature type="binding site" evidence="1">
    <location>
        <position position="39"/>
    </location>
    <ligand>
        <name>ATP</name>
        <dbReference type="ChEBI" id="CHEBI:30616"/>
    </ligand>
</feature>
<feature type="binding site" evidence="1">
    <location>
        <position position="43"/>
    </location>
    <ligand>
        <name>ATP</name>
        <dbReference type="ChEBI" id="CHEBI:30616"/>
    </ligand>
</feature>
<feature type="binding site" evidence="1">
    <location>
        <position position="60"/>
    </location>
    <ligand>
        <name>UMP</name>
        <dbReference type="ChEBI" id="CHEBI:57865"/>
    </ligand>
</feature>
<feature type="binding site" evidence="1">
    <location>
        <begin position="107"/>
        <end position="113"/>
    </location>
    <ligand>
        <name>UMP</name>
        <dbReference type="ChEBI" id="CHEBI:57865"/>
    </ligand>
</feature>
<feature type="binding site" evidence="1">
    <location>
        <position position="134"/>
    </location>
    <ligand>
        <name>ATP</name>
        <dbReference type="ChEBI" id="CHEBI:30616"/>
    </ligand>
</feature>
<feature type="binding site" evidence="1">
    <location>
        <position position="139"/>
    </location>
    <ligand>
        <name>ATP</name>
        <dbReference type="ChEBI" id="CHEBI:30616"/>
    </ligand>
</feature>
<feature type="binding site" evidence="1">
    <location>
        <position position="142"/>
    </location>
    <ligand>
        <name>ATP</name>
        <dbReference type="ChEBI" id="CHEBI:30616"/>
    </ligand>
</feature>
<name>PYRH_PYRAR</name>